<gene>
    <name type="primary">gefA</name>
    <name type="synonym">aleA</name>
    <name type="synonym">rasGEFA</name>
    <name type="ORF">DDB_G0284329</name>
</gene>
<comment type="function">
    <text evidence="7 8 9 10">Ras-bound GDP/GTP exchange factor required for normal activation of adenylyl cyclase (PubMed:17380187). Component of the Sca1 complex, a regulator of cell motility, chemotaxis and signal relay (PubMed:16234315, PubMed:20493808, PubMed:8793298). The Sca1 complex is recruited to the plasma membrane in a chemoattractant- and F-actin-dependent manner and is enriched at the leading edge of chemotaxing cells where it regulates F-actin dynamics and signal relay by controlling the activation of rasC and the downstream target of rapamycin complex 2 (TORC2)-Akt/protein kinase B (PKB) pathway (PubMed:20493808).</text>
</comment>
<comment type="subunit">
    <text evidence="9">Component of the Sca1 complex composed of at least gefA, gefH, scaA, phr, and the protein phosphatase 2A subunits pppA and pho2B (PubMed:20493808). Interacts directly with gefH (PubMed:20493808).</text>
</comment>
<comment type="subcellular location">
    <subcellularLocation>
        <location evidence="9">Cell membrane</location>
    </subcellularLocation>
    <text evidence="9">The Sca1 complex is recruited to the plasma membrane in a chemoattractant- and F-actin-dependent manner and is enriched at the leading edge of chemotaxing cells (PubMed:20493808). Membrane localization of the Sca1 complex is regulated by scaA phosphorylation by PKB and PKB-related PKBR1 (PubMed:20493808).</text>
</comment>
<comment type="developmental stage">
    <text evidence="5 6">Expressed during development; especially until 8 hours of development (PubMed:16086850). Expression is higher in the tip regions of slugs and early culminants (PubMed:11422293).</text>
</comment>
<comment type="disruption phenotype">
    <text evidence="4 9 10">Grows at a normal rate, but are severely impaired in both chemotaxis and activation of adenylyl cyclase, both of which are critical for the early stages of development (PubMed:10473630, PubMed:20493808, PubMed:8793298). Unable to aggregate (PubMed:8793298).</text>
</comment>
<protein>
    <recommendedName>
        <fullName>Ras guanine nucleotide exchange factor A</fullName>
        <shortName>Aimless</shortName>
    </recommendedName>
    <alternativeName>
        <fullName>RasGEF domain-containing protein A</fullName>
    </alternativeName>
</protein>
<sequence>MITPTSFEPVELLYSKKKVNRTNWKKNVLKSNPEINNLCERIYPINRAIQFGKQFHPGKAEVKQKLDKTAIIQLILQHLSTKGLKQTKQTLEKEARTTTPIVEGLNESRLVTYIRNALKDTDRIYDLSMEHTEYSKEERQSKITEREELLFQMDLLEDEDEDDGVNIWDEPTENIITEKVHTTEYDINKSKENKDDQDDEVVKFASLNKLVEHLTHDSKHDLQFLKTFLMTYQSFCTPEKLMSKLQQRYNCPSGHDEMATRNIQIRVINVLKGWVDNYYSDFDDKLIAMLRTFIDQIQIKFPAPASAVNKSLTKMVEKLSPVNDSKHIFNEKTPEPMVPKNIFSNNLSIYDIDEEEIARQLTLIEFEIYRNIKPPELLNQSWNKTKLKSRAPNVLKMIDRFNSVSMWVATMIIQTTKVKARARMMTRFIKIADHLKNLNNYNSLMAIIAGLNFSSVYRLKYTREELSAQTMRTYSDLEKIMNSEGSFKTYRTRLQNVPPMLPYLGVHLTDLTFIDENPNNFVTDVGGKQVSLINFTKRTLVFKIISLIQETQVVPYNLQPVHQIQEFLLNIRSDLKAHTLDQYQQELYRESLKREPKKAQRSDVL</sequence>
<organism>
    <name type="scientific">Dictyostelium discoideum</name>
    <name type="common">Social amoeba</name>
    <dbReference type="NCBI Taxonomy" id="44689"/>
    <lineage>
        <taxon>Eukaryota</taxon>
        <taxon>Amoebozoa</taxon>
        <taxon>Evosea</taxon>
        <taxon>Eumycetozoa</taxon>
        <taxon>Dictyostelia</taxon>
        <taxon>Dictyosteliales</taxon>
        <taxon>Dictyosteliaceae</taxon>
        <taxon>Dictyostelium</taxon>
    </lineage>
</organism>
<proteinExistence type="evidence at protein level"/>
<accession>Q54PQ4</accession>
<accession>Q23867</accession>
<accession>Q8IS22</accession>
<dbReference type="EMBL" id="U53884">
    <property type="protein sequence ID" value="AAB09441.1"/>
    <property type="molecule type" value="mRNA"/>
</dbReference>
<dbReference type="EMBL" id="AY160090">
    <property type="protein sequence ID" value="AAN46870.1"/>
    <property type="molecule type" value="Genomic_DNA"/>
</dbReference>
<dbReference type="EMBL" id="AAFI02000064">
    <property type="protein sequence ID" value="EAL65212.1"/>
    <property type="molecule type" value="Genomic_DNA"/>
</dbReference>
<dbReference type="RefSeq" id="XP_638600.1">
    <property type="nucleotide sequence ID" value="XM_633508.1"/>
</dbReference>
<dbReference type="SMR" id="Q54PQ4"/>
<dbReference type="FunCoup" id="Q54PQ4">
    <property type="interactions" value="13"/>
</dbReference>
<dbReference type="STRING" id="44689.Q54PQ4"/>
<dbReference type="PaxDb" id="44689-DDB0191187"/>
<dbReference type="EnsemblProtists" id="EAL65212">
    <property type="protein sequence ID" value="EAL65212"/>
    <property type="gene ID" value="DDB_G0284329"/>
</dbReference>
<dbReference type="GeneID" id="8624571"/>
<dbReference type="KEGG" id="ddi:DDB_G0284329"/>
<dbReference type="dictyBase" id="DDB_G0284329">
    <property type="gene designation" value="gefA"/>
</dbReference>
<dbReference type="VEuPathDB" id="AmoebaDB:DDB_G0284329"/>
<dbReference type="eggNOG" id="KOG3417">
    <property type="taxonomic scope" value="Eukaryota"/>
</dbReference>
<dbReference type="HOGENOM" id="CLU_452309_0_0_1"/>
<dbReference type="InParanoid" id="Q54PQ4"/>
<dbReference type="OMA" id="MTYQSFC"/>
<dbReference type="PhylomeDB" id="Q54PQ4"/>
<dbReference type="Reactome" id="R-DDI-193648">
    <property type="pathway name" value="NRAGE signals death through JNK"/>
</dbReference>
<dbReference type="Reactome" id="R-DDI-9013148">
    <property type="pathway name" value="CDC42 GTPase cycle"/>
</dbReference>
<dbReference type="Reactome" id="R-DDI-9013149">
    <property type="pathway name" value="RAC1 GTPase cycle"/>
</dbReference>
<dbReference type="PRO" id="PR:Q54PQ4"/>
<dbReference type="Proteomes" id="UP000002195">
    <property type="component" value="Chromosome 4"/>
</dbReference>
<dbReference type="GO" id="GO:0005829">
    <property type="term" value="C:cytosol"/>
    <property type="evidence" value="ECO:0000314"/>
    <property type="project" value="dictyBase"/>
</dbReference>
<dbReference type="GO" id="GO:0005886">
    <property type="term" value="C:plasma membrane"/>
    <property type="evidence" value="ECO:0000314"/>
    <property type="project" value="dictyBase"/>
</dbReference>
<dbReference type="GO" id="GO:1905742">
    <property type="term" value="C:Ras guanyl-nucleotide exchange factor complex"/>
    <property type="evidence" value="ECO:0000314"/>
    <property type="project" value="dictyBase"/>
</dbReference>
<dbReference type="GO" id="GO:0010856">
    <property type="term" value="F:adenylate cyclase activator activity"/>
    <property type="evidence" value="ECO:0000314"/>
    <property type="project" value="dictyBase"/>
</dbReference>
<dbReference type="GO" id="GO:0005085">
    <property type="term" value="F:guanyl-nucleotide exchange factor activity"/>
    <property type="evidence" value="ECO:0000314"/>
    <property type="project" value="dictyBase"/>
</dbReference>
<dbReference type="GO" id="GO:0030250">
    <property type="term" value="F:guanylate cyclase activator activity"/>
    <property type="evidence" value="ECO:0000315"/>
    <property type="project" value="dictyBase"/>
</dbReference>
<dbReference type="GO" id="GO:0030295">
    <property type="term" value="F:protein kinase activator activity"/>
    <property type="evidence" value="ECO:0000314"/>
    <property type="project" value="dictyBase"/>
</dbReference>
<dbReference type="GO" id="GO:0004860">
    <property type="term" value="F:protein kinase inhibitor activity"/>
    <property type="evidence" value="ECO:0000315"/>
    <property type="project" value="dictyBase"/>
</dbReference>
<dbReference type="GO" id="GO:0031152">
    <property type="term" value="P:aggregation involved in sorocarp development"/>
    <property type="evidence" value="ECO:0000315"/>
    <property type="project" value="dictyBase"/>
</dbReference>
<dbReference type="GO" id="GO:0043327">
    <property type="term" value="P:chemotaxis to cAMP"/>
    <property type="evidence" value="ECO:0000315"/>
    <property type="project" value="dictyBase"/>
</dbReference>
<dbReference type="GO" id="GO:0000165">
    <property type="term" value="P:MAPK cascade"/>
    <property type="evidence" value="ECO:0000315"/>
    <property type="project" value="dictyBase"/>
</dbReference>
<dbReference type="GO" id="GO:1903665">
    <property type="term" value="P:negative regulation of asexual reproduction"/>
    <property type="evidence" value="ECO:0000315"/>
    <property type="project" value="dictyBase"/>
</dbReference>
<dbReference type="GO" id="GO:0010628">
    <property type="term" value="P:positive regulation of gene expression"/>
    <property type="evidence" value="ECO:0000315"/>
    <property type="project" value="dictyBase"/>
</dbReference>
<dbReference type="GO" id="GO:0051897">
    <property type="term" value="P:positive regulation of phosphatidylinositol 3-kinase/protein kinase B signal transduction"/>
    <property type="evidence" value="ECO:0000315"/>
    <property type="project" value="dictyBase"/>
</dbReference>
<dbReference type="GO" id="GO:0046579">
    <property type="term" value="P:positive regulation of Ras protein signal transduction"/>
    <property type="evidence" value="ECO:0000315"/>
    <property type="project" value="dictyBase"/>
</dbReference>
<dbReference type="GO" id="GO:0007265">
    <property type="term" value="P:Ras protein signal transduction"/>
    <property type="evidence" value="ECO:0000314"/>
    <property type="project" value="dictyBase"/>
</dbReference>
<dbReference type="GO" id="GO:0051602">
    <property type="term" value="P:response to electrical stimulus"/>
    <property type="evidence" value="ECO:0000315"/>
    <property type="project" value="dictyBase"/>
</dbReference>
<dbReference type="GO" id="GO:0030587">
    <property type="term" value="P:sorocarp development"/>
    <property type="evidence" value="ECO:0007001"/>
    <property type="project" value="dictyBase"/>
</dbReference>
<dbReference type="CDD" id="cd00155">
    <property type="entry name" value="RasGEF"/>
    <property type="match status" value="1"/>
</dbReference>
<dbReference type="CDD" id="cd06224">
    <property type="entry name" value="REM"/>
    <property type="match status" value="1"/>
</dbReference>
<dbReference type="FunFam" id="1.10.840.10:FF:000009">
    <property type="entry name" value="rap guanine nucleotide exchange factor 1"/>
    <property type="match status" value="1"/>
</dbReference>
<dbReference type="FunFam" id="1.20.870.10:FF:000030">
    <property type="entry name" value="Ras guanine nucleotide exchange factor A"/>
    <property type="match status" value="1"/>
</dbReference>
<dbReference type="Gene3D" id="1.10.840.10">
    <property type="entry name" value="Ras guanine-nucleotide exchange factors catalytic domain"/>
    <property type="match status" value="1"/>
</dbReference>
<dbReference type="Gene3D" id="1.20.870.10">
    <property type="entry name" value="Son of sevenless (SoS) protein Chain: S domain 1"/>
    <property type="match status" value="1"/>
</dbReference>
<dbReference type="InterPro" id="IPR006594">
    <property type="entry name" value="LisH"/>
</dbReference>
<dbReference type="InterPro" id="IPR008937">
    <property type="entry name" value="Ras-like_GEF"/>
</dbReference>
<dbReference type="InterPro" id="IPR000651">
    <property type="entry name" value="Ras-like_Gua-exchang_fac_N"/>
</dbReference>
<dbReference type="InterPro" id="IPR023578">
    <property type="entry name" value="Ras_GEF_dom_sf"/>
</dbReference>
<dbReference type="InterPro" id="IPR001895">
    <property type="entry name" value="RASGEF_cat_dom"/>
</dbReference>
<dbReference type="InterPro" id="IPR036964">
    <property type="entry name" value="RASGEF_cat_dom_sf"/>
</dbReference>
<dbReference type="PANTHER" id="PTHR23113">
    <property type="entry name" value="GUANINE NUCLEOTIDE EXCHANGE FACTOR"/>
    <property type="match status" value="1"/>
</dbReference>
<dbReference type="PANTHER" id="PTHR23113:SF333">
    <property type="entry name" value="RAS GUANINE NUCLEOTIDE EXCHANGE FACTOR A"/>
    <property type="match status" value="1"/>
</dbReference>
<dbReference type="Pfam" id="PF00617">
    <property type="entry name" value="RasGEF"/>
    <property type="match status" value="1"/>
</dbReference>
<dbReference type="Pfam" id="PF00618">
    <property type="entry name" value="RasGEF_N"/>
    <property type="match status" value="1"/>
</dbReference>
<dbReference type="SMART" id="SM00667">
    <property type="entry name" value="LisH"/>
    <property type="match status" value="1"/>
</dbReference>
<dbReference type="SMART" id="SM00147">
    <property type="entry name" value="RasGEF"/>
    <property type="match status" value="1"/>
</dbReference>
<dbReference type="SMART" id="SM00229">
    <property type="entry name" value="RasGEFN"/>
    <property type="match status" value="1"/>
</dbReference>
<dbReference type="SUPFAM" id="SSF48366">
    <property type="entry name" value="Ras GEF"/>
    <property type="match status" value="1"/>
</dbReference>
<dbReference type="PROSITE" id="PS50896">
    <property type="entry name" value="LISH"/>
    <property type="match status" value="1"/>
</dbReference>
<dbReference type="PROSITE" id="PS50009">
    <property type="entry name" value="RASGEF_CAT"/>
    <property type="match status" value="1"/>
</dbReference>
<dbReference type="PROSITE" id="PS50212">
    <property type="entry name" value="RASGEF_NTER"/>
    <property type="match status" value="1"/>
</dbReference>
<reference key="1">
    <citation type="journal article" date="1996" name="Curr. Biol.">
        <title>The aimless RasGEF is required for processing of chemotactic signals through G-protein-coupled receptors in Dictyostelium.</title>
        <authorList>
            <person name="Insall R.H."/>
            <person name="Borleis J."/>
            <person name="Devreotes P.N."/>
        </authorList>
    </citation>
    <scope>NUCLEOTIDE SEQUENCE [MRNA]</scope>
    <scope>DISRUPTION PHENOTYPE</scope>
    <scope>FUNCTION</scope>
    <source>
        <strain>AX3</strain>
    </source>
</reference>
<reference key="2">
    <citation type="journal article" date="2005" name="Genome Biol.">
        <title>The Dictyostelium genome encodes numerous RasGEFs with multiple biological roles.</title>
        <authorList>
            <person name="Wilkins A."/>
            <person name="Szafranski K."/>
            <person name="Fraser D.J."/>
            <person name="Bakthavatsalam D."/>
            <person name="Mueller R."/>
            <person name="Fisher P.R."/>
            <person name="Gloeckner G."/>
            <person name="Eichinger L."/>
            <person name="Noegel A.A."/>
            <person name="Insall R.H."/>
        </authorList>
    </citation>
    <scope>NUCLEOTIDE SEQUENCE [GENOMIC DNA]</scope>
    <scope>DEVELOPMENTAL STAGE</scope>
    <source>
        <strain>AX4</strain>
    </source>
</reference>
<reference key="3">
    <citation type="journal article" date="2005" name="Nature">
        <title>The genome of the social amoeba Dictyostelium discoideum.</title>
        <authorList>
            <person name="Eichinger L."/>
            <person name="Pachebat J.A."/>
            <person name="Gloeckner G."/>
            <person name="Rajandream M.A."/>
            <person name="Sucgang R."/>
            <person name="Berriman M."/>
            <person name="Song J."/>
            <person name="Olsen R."/>
            <person name="Szafranski K."/>
            <person name="Xu Q."/>
            <person name="Tunggal B."/>
            <person name="Kummerfeld S."/>
            <person name="Madera M."/>
            <person name="Konfortov B.A."/>
            <person name="Rivero F."/>
            <person name="Bankier A.T."/>
            <person name="Lehmann R."/>
            <person name="Hamlin N."/>
            <person name="Davies R."/>
            <person name="Gaudet P."/>
            <person name="Fey P."/>
            <person name="Pilcher K."/>
            <person name="Chen G."/>
            <person name="Saunders D."/>
            <person name="Sodergren E.J."/>
            <person name="Davis P."/>
            <person name="Kerhornou A."/>
            <person name="Nie X."/>
            <person name="Hall N."/>
            <person name="Anjard C."/>
            <person name="Hemphill L."/>
            <person name="Bason N."/>
            <person name="Farbrother P."/>
            <person name="Desany B."/>
            <person name="Just E."/>
            <person name="Morio T."/>
            <person name="Rost R."/>
            <person name="Churcher C.M."/>
            <person name="Cooper J."/>
            <person name="Haydock S."/>
            <person name="van Driessche N."/>
            <person name="Cronin A."/>
            <person name="Goodhead I."/>
            <person name="Muzny D.M."/>
            <person name="Mourier T."/>
            <person name="Pain A."/>
            <person name="Lu M."/>
            <person name="Harper D."/>
            <person name="Lindsay R."/>
            <person name="Hauser H."/>
            <person name="James K.D."/>
            <person name="Quiles M."/>
            <person name="Madan Babu M."/>
            <person name="Saito T."/>
            <person name="Buchrieser C."/>
            <person name="Wardroper A."/>
            <person name="Felder M."/>
            <person name="Thangavelu M."/>
            <person name="Johnson D."/>
            <person name="Knights A."/>
            <person name="Loulseged H."/>
            <person name="Mungall K.L."/>
            <person name="Oliver K."/>
            <person name="Price C."/>
            <person name="Quail M.A."/>
            <person name="Urushihara H."/>
            <person name="Hernandez J."/>
            <person name="Rabbinowitsch E."/>
            <person name="Steffen D."/>
            <person name="Sanders M."/>
            <person name="Ma J."/>
            <person name="Kohara Y."/>
            <person name="Sharp S."/>
            <person name="Simmonds M.N."/>
            <person name="Spiegler S."/>
            <person name="Tivey A."/>
            <person name="Sugano S."/>
            <person name="White B."/>
            <person name="Walker D."/>
            <person name="Woodward J.R."/>
            <person name="Winckler T."/>
            <person name="Tanaka Y."/>
            <person name="Shaulsky G."/>
            <person name="Schleicher M."/>
            <person name="Weinstock G.M."/>
            <person name="Rosenthal A."/>
            <person name="Cox E.C."/>
            <person name="Chisholm R.L."/>
            <person name="Gibbs R.A."/>
            <person name="Loomis W.F."/>
            <person name="Platzer M."/>
            <person name="Kay R.R."/>
            <person name="Williams J.G."/>
            <person name="Dear P.H."/>
            <person name="Noegel A.A."/>
            <person name="Barrell B.G."/>
            <person name="Kuspa A."/>
        </authorList>
    </citation>
    <scope>NUCLEOTIDE SEQUENCE [LARGE SCALE GENOMIC DNA]</scope>
    <source>
        <strain>AX4</strain>
    </source>
</reference>
<reference key="4">
    <citation type="journal article" date="1999" name="Mol. Biol. Cell">
        <title>A novel Ras-interacting protein required for chemotaxis and cyclic adenosine monophosphate signal relay in Dictyostelium.</title>
        <authorList>
            <person name="Lee S."/>
            <person name="Parent C.A."/>
            <person name="Insall R."/>
            <person name="Firtel R.A."/>
        </authorList>
    </citation>
    <scope>DISRUPTION PHENOTYPE</scope>
</reference>
<reference key="5">
    <citation type="journal article" date="2001" name="Dev. Growth Differ.">
        <title>Spatial expression patterns of genes involved in cyclic AMP responses in Dictyostelium discoideum development.</title>
        <authorList>
            <person name="Tsujioka M."/>
            <person name="Yokoyama M."/>
            <person name="Nishio K."/>
            <person name="Kuwayama H."/>
            <person name="Morio T."/>
            <person name="Katoh M."/>
            <person name="Urushihara H."/>
            <person name="Saito T."/>
            <person name="Ochiai H."/>
            <person name="Tanaka Y."/>
            <person name="Takeuchi I."/>
            <person name="Maeda M."/>
        </authorList>
    </citation>
    <scope>DEVELOPMENTAL STAGE</scope>
</reference>
<reference key="6">
    <citation type="journal article" date="2005" name="Bioinformatics">
        <title>Microarray phenotyping in Dictyostelium reveals a regulon of chemotaxis genes.</title>
        <authorList>
            <person name="Booth E.O."/>
            <person name="Van Driessche N."/>
            <person name="Zhuchenko O."/>
            <person name="Kuspa A."/>
            <person name="Shaulsky G."/>
        </authorList>
    </citation>
    <scope>FUNCTION</scope>
</reference>
<reference key="7">
    <citation type="journal article" date="2007" name="EMBO Rep.">
        <title>Cyclic AMP signalling in Dictyostelium: G-proteins activate separate Ras pathways using specific RasGEFs.</title>
        <authorList>
            <person name="Kae H."/>
            <person name="Kortholt A."/>
            <person name="Rehmann H."/>
            <person name="Insall R.H."/>
            <person name="Van Haastert P.J."/>
            <person name="Spiegelman G.B."/>
            <person name="Weeks G."/>
        </authorList>
    </citation>
    <scope>FUNCTION</scope>
</reference>
<reference key="8">
    <citation type="journal article" date="2010" name="Dev. Cell">
        <title>A Ras signaling complex controls the RasC-TORC2 pathway and directed cell migration.</title>
        <authorList>
            <person name="Charest P.G."/>
            <person name="Shen Z."/>
            <person name="Lakoduk A."/>
            <person name="Sasaki A.T."/>
            <person name="Briggs S.P."/>
            <person name="Firtel R.A."/>
        </authorList>
    </citation>
    <scope>IDENTIFICATION IN THE SCA1 COMPLEX</scope>
    <scope>INTERACTION WITH GEFH</scope>
    <scope>FUNCTION</scope>
    <scope>DISRUPTION PHENOTYPE</scope>
</reference>
<feature type="chain" id="PRO_0000384459" description="Ras guanine nucleotide exchange factor A">
    <location>
        <begin position="1"/>
        <end position="605"/>
    </location>
</feature>
<feature type="domain" description="LisH" evidence="1">
    <location>
        <begin position="67"/>
        <end position="99"/>
    </location>
</feature>
<feature type="domain" description="N-terminal Ras-GEF" evidence="2">
    <location>
        <begin position="198"/>
        <end position="320"/>
    </location>
</feature>
<feature type="domain" description="Ras-GEF" evidence="3">
    <location>
        <begin position="353"/>
        <end position="597"/>
    </location>
</feature>
<feature type="sequence conflict" description="In Ref. 1; AAB09441 and 2; AAN46870." evidence="11" ref="1 2">
    <original>K</original>
    <variation>E</variation>
    <location>
        <position position="17"/>
    </location>
</feature>
<feature type="sequence conflict" description="In Ref. 1; AAB09441 and 2; AAN46870." evidence="11" ref="1 2">
    <original>N</original>
    <variation>D</variation>
    <location>
        <position position="20"/>
    </location>
</feature>
<feature type="sequence conflict" description="In Ref. 1; AAB09441 and 2; AAN46870." evidence="11" ref="1 2">
    <original>NWKK</original>
    <variation>EWRR</variation>
    <location>
        <begin position="23"/>
        <end position="26"/>
    </location>
</feature>
<feature type="sequence conflict" description="In Ref. 2; AAN46870." evidence="11" ref="2">
    <original>F</original>
    <variation>L</variation>
    <location>
        <position position="51"/>
    </location>
</feature>
<evidence type="ECO:0000255" key="1">
    <source>
        <dbReference type="PROSITE-ProRule" id="PRU00126"/>
    </source>
</evidence>
<evidence type="ECO:0000255" key="2">
    <source>
        <dbReference type="PROSITE-ProRule" id="PRU00135"/>
    </source>
</evidence>
<evidence type="ECO:0000255" key="3">
    <source>
        <dbReference type="PROSITE-ProRule" id="PRU00168"/>
    </source>
</evidence>
<evidence type="ECO:0000269" key="4">
    <source>
    </source>
</evidence>
<evidence type="ECO:0000269" key="5">
    <source>
    </source>
</evidence>
<evidence type="ECO:0000269" key="6">
    <source>
    </source>
</evidence>
<evidence type="ECO:0000269" key="7">
    <source>
    </source>
</evidence>
<evidence type="ECO:0000269" key="8">
    <source>
    </source>
</evidence>
<evidence type="ECO:0000269" key="9">
    <source>
    </source>
</evidence>
<evidence type="ECO:0000269" key="10">
    <source>
    </source>
</evidence>
<evidence type="ECO:0000305" key="11"/>
<keyword id="KW-1003">Cell membrane</keyword>
<keyword id="KW-0344">Guanine-nucleotide releasing factor</keyword>
<keyword id="KW-0472">Membrane</keyword>
<keyword id="KW-1185">Reference proteome</keyword>
<name>GEFA_DICDI</name>